<name>ARGA_HAEDU</name>
<protein>
    <recommendedName>
        <fullName evidence="1">Amino-acid acetyltransferase</fullName>
        <ecNumber evidence="1">2.3.1.1</ecNumber>
    </recommendedName>
    <alternativeName>
        <fullName evidence="1">N-acetylglutamate synthase</fullName>
        <shortName evidence="1">AGS</shortName>
        <shortName evidence="1">NAGS</shortName>
    </alternativeName>
</protein>
<evidence type="ECO:0000255" key="1">
    <source>
        <dbReference type="HAMAP-Rule" id="MF_01105"/>
    </source>
</evidence>
<comment type="catalytic activity">
    <reaction evidence="1">
        <text>L-glutamate + acetyl-CoA = N-acetyl-L-glutamate + CoA + H(+)</text>
        <dbReference type="Rhea" id="RHEA:24292"/>
        <dbReference type="ChEBI" id="CHEBI:15378"/>
        <dbReference type="ChEBI" id="CHEBI:29985"/>
        <dbReference type="ChEBI" id="CHEBI:44337"/>
        <dbReference type="ChEBI" id="CHEBI:57287"/>
        <dbReference type="ChEBI" id="CHEBI:57288"/>
        <dbReference type="EC" id="2.3.1.1"/>
    </reaction>
</comment>
<comment type="pathway">
    <text evidence="1">Amino-acid biosynthesis; L-arginine biosynthesis; N(2)-acetyl-L-ornithine from L-glutamate: step 1/4.</text>
</comment>
<comment type="subcellular location">
    <subcellularLocation>
        <location evidence="1">Cytoplasm</location>
    </subcellularLocation>
</comment>
<comment type="miscellaneous">
    <text>In bacteria which possess the bifunctional enzyme ornithine acetyltransferase/N-acetylglutamate synthase (ArgJ), ArgA fulfills an anaplerotic role.</text>
</comment>
<comment type="similarity">
    <text evidence="1">Belongs to the acetyltransferase family. ArgA subfamily.</text>
</comment>
<dbReference type="EC" id="2.3.1.1" evidence="1"/>
<dbReference type="EMBL" id="AE017143">
    <property type="protein sequence ID" value="AAP96197.1"/>
    <property type="molecule type" value="Genomic_DNA"/>
</dbReference>
<dbReference type="RefSeq" id="WP_010945246.1">
    <property type="nucleotide sequence ID" value="NC_002940.2"/>
</dbReference>
<dbReference type="SMR" id="Q7VLN8"/>
<dbReference type="STRING" id="233412.HD_1384"/>
<dbReference type="KEGG" id="hdu:HD_1384"/>
<dbReference type="eggNOG" id="COG0548">
    <property type="taxonomic scope" value="Bacteria"/>
</dbReference>
<dbReference type="eggNOG" id="COG1246">
    <property type="taxonomic scope" value="Bacteria"/>
</dbReference>
<dbReference type="HOGENOM" id="CLU_024773_0_0_6"/>
<dbReference type="OrthoDB" id="9802238at2"/>
<dbReference type="UniPathway" id="UPA00068">
    <property type="reaction ID" value="UER00106"/>
</dbReference>
<dbReference type="Proteomes" id="UP000001022">
    <property type="component" value="Chromosome"/>
</dbReference>
<dbReference type="GO" id="GO:0005737">
    <property type="term" value="C:cytoplasm"/>
    <property type="evidence" value="ECO:0007669"/>
    <property type="project" value="UniProtKB-SubCell"/>
</dbReference>
<dbReference type="GO" id="GO:0004042">
    <property type="term" value="F:L-glutamate N-acetyltransferase activity"/>
    <property type="evidence" value="ECO:0007669"/>
    <property type="project" value="UniProtKB-UniRule"/>
</dbReference>
<dbReference type="GO" id="GO:0006526">
    <property type="term" value="P:L-arginine biosynthetic process"/>
    <property type="evidence" value="ECO:0007669"/>
    <property type="project" value="UniProtKB-UniRule"/>
</dbReference>
<dbReference type="CDD" id="cd04237">
    <property type="entry name" value="AAK_NAGS-ABP"/>
    <property type="match status" value="1"/>
</dbReference>
<dbReference type="CDD" id="cd04301">
    <property type="entry name" value="NAT_SF"/>
    <property type="match status" value="1"/>
</dbReference>
<dbReference type="Gene3D" id="3.40.630.30">
    <property type="match status" value="1"/>
</dbReference>
<dbReference type="Gene3D" id="3.40.1160.10">
    <property type="entry name" value="Acetylglutamate kinase-like"/>
    <property type="match status" value="1"/>
</dbReference>
<dbReference type="HAMAP" id="MF_01105">
    <property type="entry name" value="N_acetyl_glu_synth"/>
    <property type="match status" value="1"/>
</dbReference>
<dbReference type="InterPro" id="IPR036393">
    <property type="entry name" value="AceGlu_kinase-like_sf"/>
</dbReference>
<dbReference type="InterPro" id="IPR016181">
    <property type="entry name" value="Acyl_CoA_acyltransferase"/>
</dbReference>
<dbReference type="InterPro" id="IPR001048">
    <property type="entry name" value="Asp/Glu/Uridylate_kinase"/>
</dbReference>
<dbReference type="InterPro" id="IPR000182">
    <property type="entry name" value="GNAT_dom"/>
</dbReference>
<dbReference type="InterPro" id="IPR033719">
    <property type="entry name" value="NAGS_kin"/>
</dbReference>
<dbReference type="InterPro" id="IPR010167">
    <property type="entry name" value="NH2A_AcTrfase"/>
</dbReference>
<dbReference type="NCBIfam" id="TIGR01890">
    <property type="entry name" value="N-Ac-Glu-synth"/>
    <property type="match status" value="1"/>
</dbReference>
<dbReference type="NCBIfam" id="NF003641">
    <property type="entry name" value="PRK05279.1"/>
    <property type="match status" value="1"/>
</dbReference>
<dbReference type="PANTHER" id="PTHR30602">
    <property type="entry name" value="AMINO-ACID ACETYLTRANSFERASE"/>
    <property type="match status" value="1"/>
</dbReference>
<dbReference type="PANTHER" id="PTHR30602:SF12">
    <property type="entry name" value="AMINO-ACID ACETYLTRANSFERASE NAGS1, CHLOROPLASTIC-RELATED"/>
    <property type="match status" value="1"/>
</dbReference>
<dbReference type="Pfam" id="PF00696">
    <property type="entry name" value="AA_kinase"/>
    <property type="match status" value="1"/>
</dbReference>
<dbReference type="Pfam" id="PF00583">
    <property type="entry name" value="Acetyltransf_1"/>
    <property type="match status" value="1"/>
</dbReference>
<dbReference type="PIRSF" id="PIRSF000423">
    <property type="entry name" value="ArgA"/>
    <property type="match status" value="1"/>
</dbReference>
<dbReference type="SUPFAM" id="SSF55729">
    <property type="entry name" value="Acyl-CoA N-acyltransferases (Nat)"/>
    <property type="match status" value="1"/>
</dbReference>
<dbReference type="SUPFAM" id="SSF53633">
    <property type="entry name" value="Carbamate kinase-like"/>
    <property type="match status" value="1"/>
</dbReference>
<dbReference type="PROSITE" id="PS51186">
    <property type="entry name" value="GNAT"/>
    <property type="match status" value="1"/>
</dbReference>
<proteinExistence type="inferred from homology"/>
<organism>
    <name type="scientific">Haemophilus ducreyi (strain 35000HP / ATCC 700724)</name>
    <dbReference type="NCBI Taxonomy" id="233412"/>
    <lineage>
        <taxon>Bacteria</taxon>
        <taxon>Pseudomonadati</taxon>
        <taxon>Pseudomonadota</taxon>
        <taxon>Gammaproteobacteria</taxon>
        <taxon>Pasteurellales</taxon>
        <taxon>Pasteurellaceae</taxon>
        <taxon>Haemophilus</taxon>
    </lineage>
</organism>
<keyword id="KW-0012">Acyltransferase</keyword>
<keyword id="KW-0028">Amino-acid biosynthesis</keyword>
<keyword id="KW-0055">Arginine biosynthesis</keyword>
<keyword id="KW-0963">Cytoplasm</keyword>
<keyword id="KW-1185">Reference proteome</keyword>
<keyword id="KW-0808">Transferase</keyword>
<feature type="chain" id="PRO_0000186793" description="Amino-acid acetyltransferase">
    <location>
        <begin position="1"/>
        <end position="437"/>
    </location>
</feature>
<feature type="domain" description="N-acetyltransferase" evidence="1">
    <location>
        <begin position="289"/>
        <end position="437"/>
    </location>
</feature>
<accession>Q7VLN8</accession>
<gene>
    <name evidence="1" type="primary">argA</name>
    <name type="ordered locus">HD_1384</name>
</gene>
<sequence>MRNTELIEWFRQSAPYVNMHRHKTFVIMLDGNAIAHPNFINITNDISLLHSLGIKLVIVFGARCQIENLLKQNNISSSYHHNIRVTDSNMLEIIKQAVGGLHYDIFSRLSLRLPHSPVLNVVSSNAILAQPLGVIDGVDYGLSGKIRRINIEAIQQQLAQNAIVVIGPIAPSVTGKMFNLAFEEIATQLAIKLKVDKLIAFCDRQGLLDEQGKVISDIHPREAKQHLKKFIQQGDYHHSAARFLQAAIDVCHAGIKRSHLISYQTDGSLLQELFSRDGVGTQLSEASSECIRLATSFDIAGLLNLIRPLEDQGLLVKRSREQLEMEISQYTIIERDGIVIACAALIHYPAEKMAEMACVAVHPDYRDSARGDILLEAIKRRAYKLNIEKLFVLTTQTIQWFQERGFVQIQPTDLPVEKQRHYNYQRMSKVLMLALDN</sequence>
<reference key="1">
    <citation type="submission" date="2003-06" db="EMBL/GenBank/DDBJ databases">
        <title>The complete genome sequence of Haemophilus ducreyi.</title>
        <authorList>
            <person name="Munson R.S. Jr."/>
            <person name="Ray W.C."/>
            <person name="Mahairas G."/>
            <person name="Sabo P."/>
            <person name="Mungur R."/>
            <person name="Johnson L."/>
            <person name="Nguyen D."/>
            <person name="Wang J."/>
            <person name="Forst C."/>
            <person name="Hood L."/>
        </authorList>
    </citation>
    <scope>NUCLEOTIDE SEQUENCE [LARGE SCALE GENOMIC DNA]</scope>
    <source>
        <strain>35000HP / ATCC 700724</strain>
    </source>
</reference>